<reference key="1">
    <citation type="journal article" date="1998" name="Nature">
        <title>Deciphering the biology of Mycobacterium tuberculosis from the complete genome sequence.</title>
        <authorList>
            <person name="Cole S.T."/>
            <person name="Brosch R."/>
            <person name="Parkhill J."/>
            <person name="Garnier T."/>
            <person name="Churcher C.M."/>
            <person name="Harris D.E."/>
            <person name="Gordon S.V."/>
            <person name="Eiglmeier K."/>
            <person name="Gas S."/>
            <person name="Barry C.E. III"/>
            <person name="Tekaia F."/>
            <person name="Badcock K."/>
            <person name="Basham D."/>
            <person name="Brown D."/>
            <person name="Chillingworth T."/>
            <person name="Connor R."/>
            <person name="Davies R.M."/>
            <person name="Devlin K."/>
            <person name="Feltwell T."/>
            <person name="Gentles S."/>
            <person name="Hamlin N."/>
            <person name="Holroyd S."/>
            <person name="Hornsby T."/>
            <person name="Jagels K."/>
            <person name="Krogh A."/>
            <person name="McLean J."/>
            <person name="Moule S."/>
            <person name="Murphy L.D."/>
            <person name="Oliver S."/>
            <person name="Osborne J."/>
            <person name="Quail M.A."/>
            <person name="Rajandream M.A."/>
            <person name="Rogers J."/>
            <person name="Rutter S."/>
            <person name="Seeger K."/>
            <person name="Skelton S."/>
            <person name="Squares S."/>
            <person name="Squares R."/>
            <person name="Sulston J.E."/>
            <person name="Taylor K."/>
            <person name="Whitehead S."/>
            <person name="Barrell B.G."/>
        </authorList>
    </citation>
    <scope>NUCLEOTIDE SEQUENCE [LARGE SCALE GENOMIC DNA]</scope>
    <source>
        <strain>ATCC 25618 / H37Rv</strain>
    </source>
</reference>
<reference key="2">
    <citation type="journal article" date="2002" name="Infect. Immun.">
        <title>IdeR, an essential gene in Mycobacterium tuberculosis: role of IdeR in iron-dependent gene expression, iron metabolism, and oxidative stress response.</title>
        <authorList>
            <person name="Rodriguez G.M."/>
            <person name="Voskuil M.I."/>
            <person name="Gold B."/>
            <person name="Schoolnik G.K."/>
            <person name="Smith I."/>
        </authorList>
    </citation>
    <scope>INDUCTION</scope>
</reference>
<reference key="3">
    <citation type="journal article" date="2007" name="J. Bacteriol.">
        <title>Global analysis of the Mycobacterium tuberculosis Zur (FurB) regulon.</title>
        <authorList>
            <person name="Maciag A."/>
            <person name="Dainese E."/>
            <person name="Rodriguez G.M."/>
            <person name="Milano A."/>
            <person name="Provvedi R."/>
            <person name="Pasca M.R."/>
            <person name="Smith I."/>
            <person name="Palu G."/>
            <person name="Riccardi G."/>
            <person name="Manganelli R."/>
        </authorList>
    </citation>
    <scope>INDUCTION</scope>
</reference>
<reference key="4">
    <citation type="journal article" date="2008" name="BMC Syst. Biol.">
        <title>targetTB: a target identification pipeline for Mycobacterium tuberculosis through an interactome, reactome and genome-scale structural analysis.</title>
        <authorList>
            <person name="Raman K."/>
            <person name="Yeturu K."/>
            <person name="Chandra N."/>
        </authorList>
    </citation>
    <scope>IDENTIFICATION AS A DRUG TARGET [LARGE SCALE ANALYSIS]</scope>
</reference>
<reference key="5">
    <citation type="journal article" date="2009" name="J. Bacteriol.">
        <title>Characterization of a Mycobacterium tuberculosis ESX-3 conditional mutant: essentiality and rescue by iron and zinc.</title>
        <authorList>
            <person name="Serafini A."/>
            <person name="Boldrin F."/>
            <person name="Palu G."/>
            <person name="Manganelli R."/>
        </authorList>
    </citation>
    <scope>FUNCTION</scope>
    <source>
        <strain>H37Rv</strain>
    </source>
</reference>
<reference key="6">
    <citation type="journal article" date="2009" name="PLoS Pathog.">
        <title>Systematic genetic nomenclature for type VII secretion systems.</title>
        <authorList>
            <person name="Bitter W."/>
            <person name="Houben E.N."/>
            <person name="Bottai D."/>
            <person name="Brodin P."/>
            <person name="Brown E.J."/>
            <person name="Cox J.S."/>
            <person name="Derbyshire K."/>
            <person name="Fortune S.M."/>
            <person name="Gao L.Y."/>
            <person name="Liu J."/>
            <person name="Gey van Pittius N.C."/>
            <person name="Pym A.S."/>
            <person name="Rubin E.J."/>
            <person name="Sherman D.R."/>
            <person name="Cole S.T."/>
            <person name="Brosch R."/>
        </authorList>
    </citation>
    <scope>NOMENCLATURE</scope>
</reference>
<reference key="7">
    <citation type="journal article" date="2011" name="Mol. Cell. Proteomics">
        <title>Proteogenomic analysis of Mycobacterium tuberculosis by high resolution mass spectrometry.</title>
        <authorList>
            <person name="Kelkar D.S."/>
            <person name="Kumar D."/>
            <person name="Kumar P."/>
            <person name="Balakrishnan L."/>
            <person name="Muthusamy B."/>
            <person name="Yadav A.K."/>
            <person name="Shrivastava P."/>
            <person name="Marimuthu A."/>
            <person name="Anand S."/>
            <person name="Sundaram H."/>
            <person name="Kingsbury R."/>
            <person name="Harsha H.C."/>
            <person name="Nair B."/>
            <person name="Prasad T.S."/>
            <person name="Chauhan D.S."/>
            <person name="Katoch K."/>
            <person name="Katoch V.M."/>
            <person name="Kumar P."/>
            <person name="Chaerkady R."/>
            <person name="Ramachandran S."/>
            <person name="Dash D."/>
            <person name="Pandey A."/>
        </authorList>
    </citation>
    <scope>IDENTIFICATION BY MASS SPECTROMETRY [LARGE SCALE ANALYSIS]</scope>
    <source>
        <strain>ATCC 25618 / H37Rv</strain>
    </source>
</reference>
<reference key="8">
    <citation type="journal article" date="2013" name="PLoS ONE">
        <title>The ESX-3 secretion system is necessary for iron and zinc homeostasis in Mycobacterium tuberculosis.</title>
        <authorList>
            <person name="Serafini A."/>
            <person name="Pisu D."/>
            <person name="Palu G."/>
            <person name="Rodriguez G.M."/>
            <person name="Manganelli R."/>
        </authorList>
    </citation>
    <scope>FUNCTION</scope>
</reference>
<keyword id="KW-0997">Cell inner membrane</keyword>
<keyword id="KW-1003">Cell membrane</keyword>
<keyword id="KW-0472">Membrane</keyword>
<keyword id="KW-1185">Reference proteome</keyword>
<keyword id="KW-0812">Transmembrane</keyword>
<keyword id="KW-1133">Transmembrane helix</keyword>
<keyword id="KW-0813">Transport</keyword>
<accession>P9WNQ3</accession>
<accession>L0T326</accession>
<accession>O86362</accession>
<accession>Q7DA32</accession>
<organism>
    <name type="scientific">Mycobacterium tuberculosis (strain ATCC 25618 / H37Rv)</name>
    <dbReference type="NCBI Taxonomy" id="83332"/>
    <lineage>
        <taxon>Bacteria</taxon>
        <taxon>Bacillati</taxon>
        <taxon>Actinomycetota</taxon>
        <taxon>Actinomycetes</taxon>
        <taxon>Mycobacteriales</taxon>
        <taxon>Mycobacteriaceae</taxon>
        <taxon>Mycobacterium</taxon>
        <taxon>Mycobacterium tuberculosis complex</taxon>
    </lineage>
</organism>
<proteinExistence type="evidence at protein level"/>
<name>ECCD3_MYCTU</name>
<comment type="function">
    <text evidence="6 7">Part of the ESX-3 specialized secretion system, which is important for iron and zinc uptake or homeostasis.</text>
</comment>
<comment type="subunit">
    <text evidence="1">Part of the ESX-3 / type VII secretion system (T7SS), which is composed of cytosolic and membrane components. The ESX-3 membrane complex is composed of EccB3, EccC3, EccD3 and EccE3.</text>
</comment>
<comment type="subcellular location">
    <subcellularLocation>
        <location evidence="1">Cell inner membrane</location>
        <topology evidence="2">Multi-pass membrane protein</topology>
    </subcellularLocation>
</comment>
<comment type="induction">
    <text evidence="3 4">Repressed by IdeR in the presence of iron and by Zur in the presence of zinc.</text>
</comment>
<comment type="miscellaneous">
    <text evidence="5">Was identified as a high-confidence drug target.</text>
</comment>
<comment type="similarity">
    <text evidence="9">Belongs to the EccD/Snm4 family.</text>
</comment>
<gene>
    <name evidence="8" type="primary">eccD3</name>
    <name type="ordered locus">Rv0290</name>
</gene>
<feature type="chain" id="PRO_0000393235" description="ESX-3 secretion system protein EccD3">
    <location>
        <begin position="1"/>
        <end position="472"/>
    </location>
</feature>
<feature type="transmembrane region" description="Helical" evidence="2">
    <location>
        <begin position="121"/>
        <end position="141"/>
    </location>
</feature>
<feature type="transmembrane region" description="Helical" evidence="2">
    <location>
        <begin position="155"/>
        <end position="175"/>
    </location>
</feature>
<feature type="transmembrane region" description="Helical" evidence="2">
    <location>
        <begin position="183"/>
        <end position="203"/>
    </location>
</feature>
<feature type="transmembrane region" description="Helical" evidence="2">
    <location>
        <begin position="211"/>
        <end position="231"/>
    </location>
</feature>
<feature type="transmembrane region" description="Helical" evidence="2">
    <location>
        <begin position="236"/>
        <end position="256"/>
    </location>
</feature>
<feature type="transmembrane region" description="Helical" evidence="2">
    <location>
        <begin position="258"/>
        <end position="278"/>
    </location>
</feature>
<feature type="transmembrane region" description="Helical" evidence="2">
    <location>
        <begin position="327"/>
        <end position="347"/>
    </location>
</feature>
<feature type="transmembrane region" description="Helical" evidence="2">
    <location>
        <begin position="349"/>
        <end position="369"/>
    </location>
</feature>
<feature type="transmembrane region" description="Helical" evidence="2">
    <location>
        <begin position="381"/>
        <end position="401"/>
    </location>
</feature>
<feature type="transmembrane region" description="Helical" evidence="2">
    <location>
        <begin position="405"/>
        <end position="425"/>
    </location>
</feature>
<feature type="transmembrane region" description="Helical" evidence="2">
    <location>
        <begin position="450"/>
        <end position="470"/>
    </location>
</feature>
<protein>
    <recommendedName>
        <fullName evidence="9">ESX-3 secretion system protein EccD3</fullName>
    </recommendedName>
    <alternativeName>
        <fullName evidence="9">ESX conserved component D3</fullName>
    </alternativeName>
    <alternativeName>
        <fullName evidence="9">Type VII secretion system protein EccD3</fullName>
        <shortName evidence="9">T7SS protein EccD3</shortName>
    </alternativeName>
</protein>
<dbReference type="EMBL" id="AL123456">
    <property type="protein sequence ID" value="CCP43020.1"/>
    <property type="molecule type" value="Genomic_DNA"/>
</dbReference>
<dbReference type="PIR" id="H70836">
    <property type="entry name" value="H70836"/>
</dbReference>
<dbReference type="RefSeq" id="NP_214804.1">
    <property type="nucleotide sequence ID" value="NC_000962.3"/>
</dbReference>
<dbReference type="RefSeq" id="WP_003401524.1">
    <property type="nucleotide sequence ID" value="NZ_NVQJ01000026.1"/>
</dbReference>
<dbReference type="SMR" id="P9WNQ3"/>
<dbReference type="STRING" id="83332.Rv0290"/>
<dbReference type="PaxDb" id="83332-Rv0290"/>
<dbReference type="DNASU" id="886599"/>
<dbReference type="GeneID" id="886599"/>
<dbReference type="KEGG" id="mtu:Rv0290"/>
<dbReference type="KEGG" id="mtv:RVBD_0290"/>
<dbReference type="PATRIC" id="fig|83332.111.peg.326"/>
<dbReference type="TubercuList" id="Rv0290"/>
<dbReference type="eggNOG" id="ENOG5031ZT8">
    <property type="taxonomic scope" value="Bacteria"/>
</dbReference>
<dbReference type="InParanoid" id="P9WNQ3"/>
<dbReference type="OrthoDB" id="4764676at2"/>
<dbReference type="Proteomes" id="UP000001584">
    <property type="component" value="Chromosome"/>
</dbReference>
<dbReference type="GO" id="GO:0009274">
    <property type="term" value="C:peptidoglycan-based cell wall"/>
    <property type="evidence" value="ECO:0007005"/>
    <property type="project" value="MTBBASE"/>
</dbReference>
<dbReference type="GO" id="GO:0005886">
    <property type="term" value="C:plasma membrane"/>
    <property type="evidence" value="ECO:0007005"/>
    <property type="project" value="MTBBASE"/>
</dbReference>
<dbReference type="Gene3D" id="3.10.20.90">
    <property type="entry name" value="Phosphatidylinositol 3-kinase Catalytic Subunit, Chain A, domain 1"/>
    <property type="match status" value="1"/>
</dbReference>
<dbReference type="InterPro" id="IPR006707">
    <property type="entry name" value="T7SS_EccD"/>
</dbReference>
<dbReference type="InterPro" id="IPR024962">
    <property type="entry name" value="YukD-like"/>
</dbReference>
<dbReference type="NCBIfam" id="TIGR03920">
    <property type="entry name" value="T7SS_EccD"/>
    <property type="match status" value="1"/>
</dbReference>
<dbReference type="Pfam" id="PF08817">
    <property type="entry name" value="YukD"/>
    <property type="match status" value="1"/>
</dbReference>
<dbReference type="PIRSF" id="PIRSF017804">
    <property type="entry name" value="Secretion_EccD1"/>
    <property type="match status" value="1"/>
</dbReference>
<evidence type="ECO:0000250" key="1">
    <source>
        <dbReference type="UniProtKB" id="B2HSU6"/>
    </source>
</evidence>
<evidence type="ECO:0000255" key="2"/>
<evidence type="ECO:0000269" key="3">
    <source>
    </source>
</evidence>
<evidence type="ECO:0000269" key="4">
    <source>
    </source>
</evidence>
<evidence type="ECO:0000269" key="5">
    <source>
    </source>
</evidence>
<evidence type="ECO:0000269" key="6">
    <source>
    </source>
</evidence>
<evidence type="ECO:0000269" key="7">
    <source>
    </source>
</evidence>
<evidence type="ECO:0000303" key="8">
    <source>
    </source>
</evidence>
<evidence type="ECO:0000305" key="9"/>
<sequence length="472" mass="47944">MSGTVMQIVRVAILADSRLTEMALPAELPLREILPAVQRLVVPSAQNGDGGQADSGAAVQLSLAPVGGQPFSLDASLDTVGVVDGDLLVLQPVPAGPAAPGIVEDIADAAMIFSTSRLKPWGIAHIQRGALAAVIAVALLATGLTVTYRVATGVLAGLLAVAGIAVASALAGLLITIRSPRSGIALSIAALVPIGAALALAVPGKFGPAQVLLGAAGVAAWSLIALMIPSAERERVVAFFTAAAVVGASVALAAGAQLLWQLPLLSIGCGLIVAALLVTIQAAQLSALWARFPLPVIPAPGDPTPSAPPLRLLEDLPRRVRVSDAHQSGFIAAAVLLSVLGSVAIAVRPEALSVVGWYLVAATAAAATLRARVWDSAACKAWLLAQPYLVAGVLLVFYTATGRYVAAFGAVLVLAVLMLAWVVVALNPGIASPESYSLPLRRLLGLVAAGLDVSLIPVMAYLVGLFAWVLNR</sequence>